<feature type="chain" id="PRO_0000061721" description="Cytochrome b">
    <location>
        <begin position="1"/>
        <end position="379"/>
    </location>
</feature>
<feature type="transmembrane region" description="Helical" evidence="2">
    <location>
        <begin position="33"/>
        <end position="53"/>
    </location>
</feature>
<feature type="transmembrane region" description="Helical" evidence="2">
    <location>
        <begin position="77"/>
        <end position="98"/>
    </location>
</feature>
<feature type="transmembrane region" description="Helical" evidence="2">
    <location>
        <begin position="113"/>
        <end position="133"/>
    </location>
</feature>
<feature type="transmembrane region" description="Helical" evidence="2">
    <location>
        <begin position="178"/>
        <end position="198"/>
    </location>
</feature>
<feature type="transmembrane region" description="Helical" evidence="2">
    <location>
        <begin position="226"/>
        <end position="246"/>
    </location>
</feature>
<feature type="transmembrane region" description="Helical" evidence="2">
    <location>
        <begin position="288"/>
        <end position="308"/>
    </location>
</feature>
<feature type="transmembrane region" description="Helical" evidence="2">
    <location>
        <begin position="320"/>
        <end position="340"/>
    </location>
</feature>
<feature type="transmembrane region" description="Helical" evidence="2">
    <location>
        <begin position="347"/>
        <end position="367"/>
    </location>
</feature>
<feature type="binding site" description="axial binding residue" evidence="2">
    <location>
        <position position="83"/>
    </location>
    <ligand>
        <name>heme b</name>
        <dbReference type="ChEBI" id="CHEBI:60344"/>
        <label>b562</label>
    </ligand>
    <ligandPart>
        <name>Fe</name>
        <dbReference type="ChEBI" id="CHEBI:18248"/>
    </ligandPart>
</feature>
<feature type="binding site" description="axial binding residue" evidence="2">
    <location>
        <position position="97"/>
    </location>
    <ligand>
        <name>heme b</name>
        <dbReference type="ChEBI" id="CHEBI:60344"/>
        <label>b566</label>
    </ligand>
    <ligandPart>
        <name>Fe</name>
        <dbReference type="ChEBI" id="CHEBI:18248"/>
    </ligandPart>
</feature>
<feature type="binding site" description="axial binding residue" evidence="2">
    <location>
        <position position="182"/>
    </location>
    <ligand>
        <name>heme b</name>
        <dbReference type="ChEBI" id="CHEBI:60344"/>
        <label>b562</label>
    </ligand>
    <ligandPart>
        <name>Fe</name>
        <dbReference type="ChEBI" id="CHEBI:18248"/>
    </ligandPart>
</feature>
<feature type="binding site" description="axial binding residue" evidence="2">
    <location>
        <position position="196"/>
    </location>
    <ligand>
        <name>heme b</name>
        <dbReference type="ChEBI" id="CHEBI:60344"/>
        <label>b566</label>
    </ligand>
    <ligandPart>
        <name>Fe</name>
        <dbReference type="ChEBI" id="CHEBI:18248"/>
    </ligandPart>
</feature>
<feature type="binding site" evidence="2">
    <location>
        <position position="201"/>
    </location>
    <ligand>
        <name>a ubiquinone</name>
        <dbReference type="ChEBI" id="CHEBI:16389"/>
    </ligand>
</feature>
<feature type="sequence variant" description="In strain: Isolate C-201.">
    <original>T</original>
    <variation>I</variation>
    <location>
        <position position="371"/>
    </location>
</feature>
<sequence>MTNIRKSHPLAKIINESFIDLPAPSNISAWWNFGSLLGVCLILQILTGLFLAMHYTADTMTAFSSVTHICRDVNYGWIIRYMHANGASMFFICLFMHVGRGMYYGSYTFSETWNIGILLLFTVMATAFMGYVLPWGQMSFWGATVITNLLSAIPYIGTNLVEWIWGGFSVDKATLTRFFAFHFILPFIISALAAVHLLFLHETGSNNPSGVMSDSDKIPFHPYYTIKDILGLLFLILALMLLVLFSPDLLGDPDNYTPANPLNTPPHIKPEWYFLFAYAILRSIPNKLGGVLALILSILILAIIPLLHTSKQRSMMFRPLSQCLFWFLVADLLILTWIGGQPVEHPFITIGQLASIFYFSILLVLMPIFGTIENRLLKW</sequence>
<geneLocation type="mitochondrion"/>
<proteinExistence type="inferred from homology"/>
<accession>Q71FJ0</accession>
<accession>Q85PM9</accession>
<protein>
    <recommendedName>
        <fullName>Cytochrome b</fullName>
    </recommendedName>
    <alternativeName>
        <fullName>Complex III subunit 3</fullName>
    </alternativeName>
    <alternativeName>
        <fullName>Complex III subunit III</fullName>
    </alternativeName>
    <alternativeName>
        <fullName>Cytochrome b-c1 complex subunit 3</fullName>
    </alternativeName>
    <alternativeName>
        <fullName>Ubiquinol-cytochrome-c reductase complex cytochrome b subunit</fullName>
    </alternativeName>
</protein>
<reference key="1">
    <citation type="journal article" date="2003" name="Nature">
        <title>Single origin of Malagasy Carnivora from an African ancestor.</title>
        <authorList>
            <person name="Yoder A.D."/>
            <person name="Burns M.M."/>
            <person name="Zehr S."/>
            <person name="Delefosse T."/>
            <person name="Veron G."/>
            <person name="Goodman S.M."/>
            <person name="Flynn J.J."/>
        </authorList>
    </citation>
    <scope>NUCLEOTIDE SEQUENCE [GENOMIC DNA]</scope>
    <source>
        <strain>Isolate LRH-4121</strain>
    </source>
</reference>
<reference key="2">
    <citation type="journal article" date="2004" name="Zool. Scr.">
        <title>First molecular evidence for reassessing phylogenetic affinities between genets (Genetta) and the enigmatic genet-like taxa Osbornictis, Poiana and Prionodon (Carnivora, Viverridae).</title>
        <authorList>
            <person name="Gaubert P."/>
            <person name="Tranier M."/>
            <person name="Delmas A.-S."/>
            <person name="Colyn M."/>
            <person name="Veron G."/>
        </authorList>
    </citation>
    <scope>NUCLEOTIDE SEQUENCE [GENOMIC DNA]</scope>
    <source>
        <strain>Isolate C-201</strain>
    </source>
</reference>
<dbReference type="EMBL" id="AY170112">
    <property type="protein sequence ID" value="AAN85631.1"/>
    <property type="molecule type" value="Genomic_DNA"/>
</dbReference>
<dbReference type="EMBL" id="AF511045">
    <property type="protein sequence ID" value="AAQ08021.1"/>
    <property type="molecule type" value="Genomic_DNA"/>
</dbReference>
<dbReference type="SMR" id="Q71FJ0"/>
<dbReference type="GO" id="GO:0005743">
    <property type="term" value="C:mitochondrial inner membrane"/>
    <property type="evidence" value="ECO:0007669"/>
    <property type="project" value="UniProtKB-SubCell"/>
</dbReference>
<dbReference type="GO" id="GO:0045275">
    <property type="term" value="C:respiratory chain complex III"/>
    <property type="evidence" value="ECO:0007669"/>
    <property type="project" value="InterPro"/>
</dbReference>
<dbReference type="GO" id="GO:0046872">
    <property type="term" value="F:metal ion binding"/>
    <property type="evidence" value="ECO:0007669"/>
    <property type="project" value="UniProtKB-KW"/>
</dbReference>
<dbReference type="GO" id="GO:0008121">
    <property type="term" value="F:ubiquinol-cytochrome-c reductase activity"/>
    <property type="evidence" value="ECO:0007669"/>
    <property type="project" value="InterPro"/>
</dbReference>
<dbReference type="GO" id="GO:0006122">
    <property type="term" value="P:mitochondrial electron transport, ubiquinol to cytochrome c"/>
    <property type="evidence" value="ECO:0007669"/>
    <property type="project" value="TreeGrafter"/>
</dbReference>
<dbReference type="CDD" id="cd00290">
    <property type="entry name" value="cytochrome_b_C"/>
    <property type="match status" value="1"/>
</dbReference>
<dbReference type="CDD" id="cd00284">
    <property type="entry name" value="Cytochrome_b_N"/>
    <property type="match status" value="1"/>
</dbReference>
<dbReference type="FunFam" id="1.20.810.10:FF:000002">
    <property type="entry name" value="Cytochrome b"/>
    <property type="match status" value="1"/>
</dbReference>
<dbReference type="Gene3D" id="1.20.810.10">
    <property type="entry name" value="Cytochrome Bc1 Complex, Chain C"/>
    <property type="match status" value="1"/>
</dbReference>
<dbReference type="InterPro" id="IPR005798">
    <property type="entry name" value="Cyt_b/b6_C"/>
</dbReference>
<dbReference type="InterPro" id="IPR036150">
    <property type="entry name" value="Cyt_b/b6_C_sf"/>
</dbReference>
<dbReference type="InterPro" id="IPR005797">
    <property type="entry name" value="Cyt_b/b6_N"/>
</dbReference>
<dbReference type="InterPro" id="IPR027387">
    <property type="entry name" value="Cytb/b6-like_sf"/>
</dbReference>
<dbReference type="InterPro" id="IPR030689">
    <property type="entry name" value="Cytochrome_b"/>
</dbReference>
<dbReference type="InterPro" id="IPR048260">
    <property type="entry name" value="Cytochrome_b_C_euk/bac"/>
</dbReference>
<dbReference type="InterPro" id="IPR048259">
    <property type="entry name" value="Cytochrome_b_N_euk/bac"/>
</dbReference>
<dbReference type="InterPro" id="IPR016174">
    <property type="entry name" value="Di-haem_cyt_TM"/>
</dbReference>
<dbReference type="PANTHER" id="PTHR19271">
    <property type="entry name" value="CYTOCHROME B"/>
    <property type="match status" value="1"/>
</dbReference>
<dbReference type="PANTHER" id="PTHR19271:SF16">
    <property type="entry name" value="CYTOCHROME B"/>
    <property type="match status" value="1"/>
</dbReference>
<dbReference type="Pfam" id="PF00032">
    <property type="entry name" value="Cytochrom_B_C"/>
    <property type="match status" value="1"/>
</dbReference>
<dbReference type="Pfam" id="PF00033">
    <property type="entry name" value="Cytochrome_B"/>
    <property type="match status" value="1"/>
</dbReference>
<dbReference type="PIRSF" id="PIRSF038885">
    <property type="entry name" value="COB"/>
    <property type="match status" value="1"/>
</dbReference>
<dbReference type="SUPFAM" id="SSF81648">
    <property type="entry name" value="a domain/subunit of cytochrome bc1 complex (Ubiquinol-cytochrome c reductase)"/>
    <property type="match status" value="1"/>
</dbReference>
<dbReference type="SUPFAM" id="SSF81342">
    <property type="entry name" value="Transmembrane di-heme cytochromes"/>
    <property type="match status" value="1"/>
</dbReference>
<dbReference type="PROSITE" id="PS51003">
    <property type="entry name" value="CYTB_CTER"/>
    <property type="match status" value="1"/>
</dbReference>
<dbReference type="PROSITE" id="PS51002">
    <property type="entry name" value="CYTB_NTER"/>
    <property type="match status" value="1"/>
</dbReference>
<comment type="function">
    <text evidence="2">Component of the ubiquinol-cytochrome c reductase complex (complex III or cytochrome b-c1 complex) that is part of the mitochondrial respiratory chain. The b-c1 complex mediates electron transfer from ubiquinol to cytochrome c. Contributes to the generation of a proton gradient across the mitochondrial membrane that is then used for ATP synthesis.</text>
</comment>
<comment type="cofactor">
    <cofactor evidence="2">
        <name>heme b</name>
        <dbReference type="ChEBI" id="CHEBI:60344"/>
    </cofactor>
    <text evidence="2">Binds 2 heme b groups non-covalently.</text>
</comment>
<comment type="subunit">
    <text evidence="2">The cytochrome bc1 complex contains 11 subunits: 3 respiratory subunits (MT-CYB, CYC1 and UQCRFS1), 2 core proteins (UQCRC1 and UQCRC2) and 6 low-molecular weight proteins (UQCRH/QCR6, UQCRB/QCR7, UQCRQ/QCR8, UQCR10/QCR9, UQCR11/QCR10 and a cleavage product of UQCRFS1). This cytochrome bc1 complex then forms a dimer.</text>
</comment>
<comment type="subcellular location">
    <subcellularLocation>
        <location evidence="2">Mitochondrion inner membrane</location>
        <topology evidence="2">Multi-pass membrane protein</topology>
    </subcellularLocation>
</comment>
<comment type="miscellaneous">
    <text evidence="1">Heme 1 (or BL or b562) is low-potential and absorbs at about 562 nm, and heme 2 (or BH or b566) is high-potential and absorbs at about 566 nm.</text>
</comment>
<comment type="similarity">
    <text evidence="3 4">Belongs to the cytochrome b family.</text>
</comment>
<comment type="caution">
    <text evidence="2">The full-length protein contains only eight transmembrane helices, not nine as predicted by bioinformatics tools.</text>
</comment>
<evidence type="ECO:0000250" key="1"/>
<evidence type="ECO:0000250" key="2">
    <source>
        <dbReference type="UniProtKB" id="P00157"/>
    </source>
</evidence>
<evidence type="ECO:0000255" key="3">
    <source>
        <dbReference type="PROSITE-ProRule" id="PRU00967"/>
    </source>
</evidence>
<evidence type="ECO:0000255" key="4">
    <source>
        <dbReference type="PROSITE-ProRule" id="PRU00968"/>
    </source>
</evidence>
<name>CYB_VIVTA</name>
<organism>
    <name type="scientific">Viverra tangalunga</name>
    <name type="common">Malayan civet</name>
    <dbReference type="NCBI Taxonomy" id="71121"/>
    <lineage>
        <taxon>Eukaryota</taxon>
        <taxon>Metazoa</taxon>
        <taxon>Chordata</taxon>
        <taxon>Craniata</taxon>
        <taxon>Vertebrata</taxon>
        <taxon>Euteleostomi</taxon>
        <taxon>Mammalia</taxon>
        <taxon>Eutheria</taxon>
        <taxon>Laurasiatheria</taxon>
        <taxon>Carnivora</taxon>
        <taxon>Feliformia</taxon>
        <taxon>Viverridae</taxon>
        <taxon>Viverrinae</taxon>
        <taxon>Viverra</taxon>
    </lineage>
</organism>
<keyword id="KW-0249">Electron transport</keyword>
<keyword id="KW-0349">Heme</keyword>
<keyword id="KW-0408">Iron</keyword>
<keyword id="KW-0472">Membrane</keyword>
<keyword id="KW-0479">Metal-binding</keyword>
<keyword id="KW-0496">Mitochondrion</keyword>
<keyword id="KW-0999">Mitochondrion inner membrane</keyword>
<keyword id="KW-0679">Respiratory chain</keyword>
<keyword id="KW-0812">Transmembrane</keyword>
<keyword id="KW-1133">Transmembrane helix</keyword>
<keyword id="KW-0813">Transport</keyword>
<keyword id="KW-0830">Ubiquinone</keyword>
<gene>
    <name type="primary">MT-CYB</name>
    <name type="synonym">COB</name>
    <name type="synonym">CYTB</name>
    <name type="synonym">MTCYB</name>
</gene>